<name>RL2_NATPD</name>
<protein>
    <recommendedName>
        <fullName evidence="1">Large ribosomal subunit protein uL2</fullName>
    </recommendedName>
    <alternativeName>
        <fullName evidence="3">50S ribosomal protein L2</fullName>
    </alternativeName>
</protein>
<evidence type="ECO:0000255" key="1">
    <source>
        <dbReference type="HAMAP-Rule" id="MF_01320"/>
    </source>
</evidence>
<evidence type="ECO:0000256" key="2">
    <source>
        <dbReference type="SAM" id="MobiDB-lite"/>
    </source>
</evidence>
<evidence type="ECO:0000305" key="3"/>
<reference key="1">
    <citation type="journal article" date="2005" name="Genome Res.">
        <title>Living with two extremes: conclusions from the genome sequence of Natronomonas pharaonis.</title>
        <authorList>
            <person name="Falb M."/>
            <person name="Pfeiffer F."/>
            <person name="Palm P."/>
            <person name="Rodewald K."/>
            <person name="Hickmann V."/>
            <person name="Tittor J."/>
            <person name="Oesterhelt D."/>
        </authorList>
    </citation>
    <scope>NUCLEOTIDE SEQUENCE [LARGE SCALE GENOMIC DNA]</scope>
    <source>
        <strain>ATCC 35678 / DSM 2160 / CIP 103997 / JCM 8858 / NBRC 14720 / NCIMB 2260 / Gabara</strain>
    </source>
</reference>
<comment type="function">
    <text evidence="1">One of the primary rRNA binding proteins. Required for association of the 30S and 50S subunits to form the 70S ribosome, for tRNA binding and peptide bond formation. It has been suggested to have peptidyltransferase activity; this is somewhat controversial. Makes several contacts with the 16S rRNA in the 70S ribosome.</text>
</comment>
<comment type="subunit">
    <text evidence="1">Part of the 50S ribosomal subunit. Forms a bridge to the 30S subunit in the 70S ribosome.</text>
</comment>
<comment type="similarity">
    <text evidence="1">Belongs to the universal ribosomal protein uL2 family.</text>
</comment>
<organism>
    <name type="scientific">Natronomonas pharaonis (strain ATCC 35678 / DSM 2160 / CIP 103997 / JCM 8858 / NBRC 14720 / NCIMB 2260 / Gabara)</name>
    <name type="common">Halobacterium pharaonis</name>
    <dbReference type="NCBI Taxonomy" id="348780"/>
    <lineage>
        <taxon>Archaea</taxon>
        <taxon>Methanobacteriati</taxon>
        <taxon>Methanobacteriota</taxon>
        <taxon>Stenosarchaea group</taxon>
        <taxon>Halobacteria</taxon>
        <taxon>Halobacteriales</taxon>
        <taxon>Haloarculaceae</taxon>
        <taxon>Natronomonas</taxon>
    </lineage>
</organism>
<feature type="chain" id="PRO_0000237293" description="Large ribosomal subunit protein uL2">
    <location>
        <begin position="1"/>
        <end position="243"/>
    </location>
</feature>
<feature type="region of interest" description="Disordered" evidence="2">
    <location>
        <begin position="198"/>
        <end position="243"/>
    </location>
</feature>
<feature type="compositionally biased region" description="Basic and acidic residues" evidence="2">
    <location>
        <begin position="221"/>
        <end position="231"/>
    </location>
</feature>
<sequence>MGRRILGQRRGRGTSTFRAPSHRYKADLSHRNVEESDLVTGEVVDIEHDPARSAPLADVQFDDGDRRLVLAPEGVTVGDEIQIGVSAEIAPGNTMPLAEIPEGVPVCNVERQPGDGGKFARASGVSATLLTHDRNAAVVQLPSGEMRRLSPECRATIGVVAGGGRTEKPFVKAGNKHHKMKSRGGKWPRVRGVAMNAVDHPFGGGGRQHPGKPKSVSRDTPPGRKVGDIASKRTGRGGKGGQE</sequence>
<accession>Q3IMY5</accession>
<gene>
    <name evidence="1" type="primary">rpl2</name>
    <name type="ordered locus">NP_4860A</name>
</gene>
<proteinExistence type="inferred from homology"/>
<keyword id="KW-1185">Reference proteome</keyword>
<keyword id="KW-0687">Ribonucleoprotein</keyword>
<keyword id="KW-0689">Ribosomal protein</keyword>
<keyword id="KW-0694">RNA-binding</keyword>
<keyword id="KW-0699">rRNA-binding</keyword>
<dbReference type="EMBL" id="CR936257">
    <property type="protein sequence ID" value="CAI50521.1"/>
    <property type="molecule type" value="Genomic_DNA"/>
</dbReference>
<dbReference type="RefSeq" id="WP_011324133.1">
    <property type="nucleotide sequence ID" value="NC_007426.1"/>
</dbReference>
<dbReference type="SMR" id="Q3IMY5"/>
<dbReference type="STRING" id="348780.NP_4860A"/>
<dbReference type="EnsemblBacteria" id="CAI50521">
    <property type="protein sequence ID" value="CAI50521"/>
    <property type="gene ID" value="NP_4860A"/>
</dbReference>
<dbReference type="GeneID" id="3703130"/>
<dbReference type="KEGG" id="nph:NP_4860A"/>
<dbReference type="eggNOG" id="arCOG04067">
    <property type="taxonomic scope" value="Archaea"/>
</dbReference>
<dbReference type="HOGENOM" id="CLU_036235_0_1_2"/>
<dbReference type="OrthoDB" id="5987at2157"/>
<dbReference type="Proteomes" id="UP000002698">
    <property type="component" value="Chromosome"/>
</dbReference>
<dbReference type="GO" id="GO:0022625">
    <property type="term" value="C:cytosolic large ribosomal subunit"/>
    <property type="evidence" value="ECO:0007669"/>
    <property type="project" value="TreeGrafter"/>
</dbReference>
<dbReference type="GO" id="GO:0019843">
    <property type="term" value="F:rRNA binding"/>
    <property type="evidence" value="ECO:0007669"/>
    <property type="project" value="UniProtKB-UniRule"/>
</dbReference>
<dbReference type="GO" id="GO:0003735">
    <property type="term" value="F:structural constituent of ribosome"/>
    <property type="evidence" value="ECO:0007669"/>
    <property type="project" value="InterPro"/>
</dbReference>
<dbReference type="GO" id="GO:0002181">
    <property type="term" value="P:cytoplasmic translation"/>
    <property type="evidence" value="ECO:0007669"/>
    <property type="project" value="TreeGrafter"/>
</dbReference>
<dbReference type="FunFam" id="2.30.30.30:FF:000001">
    <property type="entry name" value="50S ribosomal protein L2"/>
    <property type="match status" value="1"/>
</dbReference>
<dbReference type="FunFam" id="2.40.50.140:FF:000020">
    <property type="entry name" value="60S ribosomal protein L2"/>
    <property type="match status" value="1"/>
</dbReference>
<dbReference type="FunFam" id="4.10.950.10:FF:000002">
    <property type="entry name" value="60S ribosomal protein L2"/>
    <property type="match status" value="1"/>
</dbReference>
<dbReference type="Gene3D" id="2.30.30.30">
    <property type="match status" value="1"/>
</dbReference>
<dbReference type="Gene3D" id="2.40.50.140">
    <property type="entry name" value="Nucleic acid-binding proteins"/>
    <property type="match status" value="1"/>
</dbReference>
<dbReference type="Gene3D" id="4.10.950.10">
    <property type="entry name" value="Ribosomal protein L2, domain 3"/>
    <property type="match status" value="1"/>
</dbReference>
<dbReference type="HAMAP" id="MF_01320_A">
    <property type="entry name" value="Ribosomal_uL2_A"/>
    <property type="match status" value="1"/>
</dbReference>
<dbReference type="InterPro" id="IPR012340">
    <property type="entry name" value="NA-bd_OB-fold"/>
</dbReference>
<dbReference type="InterPro" id="IPR014722">
    <property type="entry name" value="Rib_uL2_dom2"/>
</dbReference>
<dbReference type="InterPro" id="IPR002171">
    <property type="entry name" value="Ribosomal_uL2"/>
</dbReference>
<dbReference type="InterPro" id="IPR023672">
    <property type="entry name" value="Ribosomal_uL2_arc_euk"/>
</dbReference>
<dbReference type="InterPro" id="IPR022669">
    <property type="entry name" value="Ribosomal_uL2_C"/>
</dbReference>
<dbReference type="InterPro" id="IPR022671">
    <property type="entry name" value="Ribosomal_uL2_CS"/>
</dbReference>
<dbReference type="InterPro" id="IPR014726">
    <property type="entry name" value="Ribosomal_uL2_dom3"/>
</dbReference>
<dbReference type="InterPro" id="IPR022666">
    <property type="entry name" value="Ribosomal_uL2_RNA-bd_dom"/>
</dbReference>
<dbReference type="InterPro" id="IPR008991">
    <property type="entry name" value="Translation_prot_SH3-like_sf"/>
</dbReference>
<dbReference type="NCBIfam" id="NF007180">
    <property type="entry name" value="PRK09612.1"/>
    <property type="match status" value="1"/>
</dbReference>
<dbReference type="PANTHER" id="PTHR13691:SF16">
    <property type="entry name" value="LARGE RIBOSOMAL SUBUNIT PROTEIN UL2"/>
    <property type="match status" value="1"/>
</dbReference>
<dbReference type="PANTHER" id="PTHR13691">
    <property type="entry name" value="RIBOSOMAL PROTEIN L2"/>
    <property type="match status" value="1"/>
</dbReference>
<dbReference type="Pfam" id="PF00181">
    <property type="entry name" value="Ribosomal_L2"/>
    <property type="match status" value="1"/>
</dbReference>
<dbReference type="Pfam" id="PF03947">
    <property type="entry name" value="Ribosomal_L2_C"/>
    <property type="match status" value="1"/>
</dbReference>
<dbReference type="PIRSF" id="PIRSF002158">
    <property type="entry name" value="Ribosomal_L2"/>
    <property type="match status" value="1"/>
</dbReference>
<dbReference type="SMART" id="SM01383">
    <property type="entry name" value="Ribosomal_L2"/>
    <property type="match status" value="1"/>
</dbReference>
<dbReference type="SMART" id="SM01382">
    <property type="entry name" value="Ribosomal_L2_C"/>
    <property type="match status" value="1"/>
</dbReference>
<dbReference type="SUPFAM" id="SSF50249">
    <property type="entry name" value="Nucleic acid-binding proteins"/>
    <property type="match status" value="1"/>
</dbReference>
<dbReference type="SUPFAM" id="SSF50104">
    <property type="entry name" value="Translation proteins SH3-like domain"/>
    <property type="match status" value="1"/>
</dbReference>
<dbReference type="PROSITE" id="PS00467">
    <property type="entry name" value="RIBOSOMAL_L2"/>
    <property type="match status" value="1"/>
</dbReference>